<evidence type="ECO:0000255" key="1">
    <source>
        <dbReference type="HAMAP-Rule" id="MF_00607"/>
    </source>
</evidence>
<protein>
    <recommendedName>
        <fullName evidence="1">Ribosomal RNA small subunit methyltransferase A</fullName>
        <ecNumber evidence="1">2.1.1.182</ecNumber>
    </recommendedName>
    <alternativeName>
        <fullName evidence="1">16S rRNA (adenine(1518)-N(6)/adenine(1519)-N(6))-dimethyltransferase</fullName>
    </alternativeName>
    <alternativeName>
        <fullName evidence="1">16S rRNA dimethyladenosine transferase</fullName>
    </alternativeName>
    <alternativeName>
        <fullName evidence="1">16S rRNA dimethylase</fullName>
    </alternativeName>
    <alternativeName>
        <fullName evidence="1">S-adenosylmethionine-6-N', N'-adenosyl(rRNA) dimethyltransferase</fullName>
    </alternativeName>
</protein>
<comment type="function">
    <text evidence="1">Specifically dimethylates two adjacent adenosines (A1518 and A1519) in the loop of a conserved hairpin near the 3'-end of 16S rRNA in the 30S particle. May play a critical role in biogenesis of 30S subunits.</text>
</comment>
<comment type="catalytic activity">
    <reaction evidence="1">
        <text>adenosine(1518)/adenosine(1519) in 16S rRNA + 4 S-adenosyl-L-methionine = N(6)-dimethyladenosine(1518)/N(6)-dimethyladenosine(1519) in 16S rRNA + 4 S-adenosyl-L-homocysteine + 4 H(+)</text>
        <dbReference type="Rhea" id="RHEA:19609"/>
        <dbReference type="Rhea" id="RHEA-COMP:10232"/>
        <dbReference type="Rhea" id="RHEA-COMP:10233"/>
        <dbReference type="ChEBI" id="CHEBI:15378"/>
        <dbReference type="ChEBI" id="CHEBI:57856"/>
        <dbReference type="ChEBI" id="CHEBI:59789"/>
        <dbReference type="ChEBI" id="CHEBI:74411"/>
        <dbReference type="ChEBI" id="CHEBI:74493"/>
        <dbReference type="EC" id="2.1.1.182"/>
    </reaction>
</comment>
<comment type="subcellular location">
    <subcellularLocation>
        <location evidence="1">Cytoplasm</location>
    </subcellularLocation>
</comment>
<comment type="similarity">
    <text evidence="1">Belongs to the class I-like SAM-binding methyltransferase superfamily. rRNA adenine N(6)-methyltransferase family. RsmA subfamily.</text>
</comment>
<organism>
    <name type="scientific">Bordetella petrii (strain ATCC BAA-461 / DSM 12804 / CCUG 43448)</name>
    <dbReference type="NCBI Taxonomy" id="340100"/>
    <lineage>
        <taxon>Bacteria</taxon>
        <taxon>Pseudomonadati</taxon>
        <taxon>Pseudomonadota</taxon>
        <taxon>Betaproteobacteria</taxon>
        <taxon>Burkholderiales</taxon>
        <taxon>Alcaligenaceae</taxon>
        <taxon>Bordetella</taxon>
    </lineage>
</organism>
<sequence length="262" mass="28825">MSRHQARKRFGQHFLTDDSVVEAIVRAIAPARGDRVVEIGPGLSALTQPLLRGLDHLTVVEIDRDLAARLRNAHAPGRLTVIEADALTVDFASLGERLRVVGNLPYNISSPLLFHLMAAADTVRDQHFMLQREVIDRMVAAPGSADYGRLSVMLQSRYRMDKLFDVPPEAFDPPPRVVSAVVRMVPLPADRLRPASEAALQAVVARAFAQRRKMLRRGLGDWAALVPWDALDIAPTARAEEISVEKFIRLTDALLQAGAVPA</sequence>
<reference key="1">
    <citation type="journal article" date="2008" name="BMC Genomics">
        <title>The missing link: Bordetella petrii is endowed with both the metabolic versatility of environmental bacteria and virulence traits of pathogenic Bordetellae.</title>
        <authorList>
            <person name="Gross R."/>
            <person name="Guzman C.A."/>
            <person name="Sebaihia M."/>
            <person name="Martin dos Santos V.A.P."/>
            <person name="Pieper D.H."/>
            <person name="Koebnik R."/>
            <person name="Lechner M."/>
            <person name="Bartels D."/>
            <person name="Buhrmester J."/>
            <person name="Choudhuri J.V."/>
            <person name="Ebensen T."/>
            <person name="Gaigalat L."/>
            <person name="Herrmann S."/>
            <person name="Khachane A.N."/>
            <person name="Larisch C."/>
            <person name="Link S."/>
            <person name="Linke B."/>
            <person name="Meyer F."/>
            <person name="Mormann S."/>
            <person name="Nakunst D."/>
            <person name="Rueckert C."/>
            <person name="Schneiker-Bekel S."/>
            <person name="Schulze K."/>
            <person name="Voerholter F.-J."/>
            <person name="Yevsa T."/>
            <person name="Engle J.T."/>
            <person name="Goldman W.E."/>
            <person name="Puehler A."/>
            <person name="Goebel U.B."/>
            <person name="Goesmann A."/>
            <person name="Bloecker H."/>
            <person name="Kaiser O."/>
            <person name="Martinez-Arias R."/>
        </authorList>
    </citation>
    <scope>NUCLEOTIDE SEQUENCE [LARGE SCALE GENOMIC DNA]</scope>
    <source>
        <strain>ATCC BAA-461 / DSM 12804 / CCUG 43448</strain>
    </source>
</reference>
<dbReference type="EC" id="2.1.1.182" evidence="1"/>
<dbReference type="EMBL" id="AM902716">
    <property type="protein sequence ID" value="CAP41094.1"/>
    <property type="molecule type" value="Genomic_DNA"/>
</dbReference>
<dbReference type="SMR" id="A9I5F2"/>
<dbReference type="STRING" id="94624.Bpet0762"/>
<dbReference type="KEGG" id="bpt:Bpet0762"/>
<dbReference type="eggNOG" id="COG0030">
    <property type="taxonomic scope" value="Bacteria"/>
</dbReference>
<dbReference type="Proteomes" id="UP000001225">
    <property type="component" value="Chromosome"/>
</dbReference>
<dbReference type="GO" id="GO:0005829">
    <property type="term" value="C:cytosol"/>
    <property type="evidence" value="ECO:0007669"/>
    <property type="project" value="TreeGrafter"/>
</dbReference>
<dbReference type="GO" id="GO:0052908">
    <property type="term" value="F:16S rRNA (adenine(1518)-N(6)/adenine(1519)-N(6))-dimethyltransferase activity"/>
    <property type="evidence" value="ECO:0007669"/>
    <property type="project" value="UniProtKB-EC"/>
</dbReference>
<dbReference type="GO" id="GO:0003723">
    <property type="term" value="F:RNA binding"/>
    <property type="evidence" value="ECO:0007669"/>
    <property type="project" value="UniProtKB-KW"/>
</dbReference>
<dbReference type="CDD" id="cd02440">
    <property type="entry name" value="AdoMet_MTases"/>
    <property type="match status" value="1"/>
</dbReference>
<dbReference type="FunFam" id="1.10.8.100:FF:000001">
    <property type="entry name" value="Ribosomal RNA small subunit methyltransferase A"/>
    <property type="match status" value="1"/>
</dbReference>
<dbReference type="Gene3D" id="1.10.8.100">
    <property type="entry name" value="Ribosomal RNA adenine dimethylase-like, domain 2"/>
    <property type="match status" value="1"/>
</dbReference>
<dbReference type="Gene3D" id="3.40.50.150">
    <property type="entry name" value="Vaccinia Virus protein VP39"/>
    <property type="match status" value="1"/>
</dbReference>
<dbReference type="HAMAP" id="MF_00607">
    <property type="entry name" value="16SrRNA_methyltr_A"/>
    <property type="match status" value="1"/>
</dbReference>
<dbReference type="InterPro" id="IPR001737">
    <property type="entry name" value="KsgA/Erm"/>
</dbReference>
<dbReference type="InterPro" id="IPR023165">
    <property type="entry name" value="rRNA_Ade_diMease-like_C"/>
</dbReference>
<dbReference type="InterPro" id="IPR020596">
    <property type="entry name" value="rRNA_Ade_Mease_Trfase_CS"/>
</dbReference>
<dbReference type="InterPro" id="IPR020598">
    <property type="entry name" value="rRNA_Ade_methylase_Trfase_N"/>
</dbReference>
<dbReference type="InterPro" id="IPR011530">
    <property type="entry name" value="rRNA_adenine_dimethylase"/>
</dbReference>
<dbReference type="InterPro" id="IPR029063">
    <property type="entry name" value="SAM-dependent_MTases_sf"/>
</dbReference>
<dbReference type="NCBIfam" id="TIGR00755">
    <property type="entry name" value="ksgA"/>
    <property type="match status" value="1"/>
</dbReference>
<dbReference type="PANTHER" id="PTHR11727">
    <property type="entry name" value="DIMETHYLADENOSINE TRANSFERASE"/>
    <property type="match status" value="1"/>
</dbReference>
<dbReference type="PANTHER" id="PTHR11727:SF7">
    <property type="entry name" value="DIMETHYLADENOSINE TRANSFERASE-RELATED"/>
    <property type="match status" value="1"/>
</dbReference>
<dbReference type="Pfam" id="PF00398">
    <property type="entry name" value="RrnaAD"/>
    <property type="match status" value="1"/>
</dbReference>
<dbReference type="SMART" id="SM00650">
    <property type="entry name" value="rADc"/>
    <property type="match status" value="1"/>
</dbReference>
<dbReference type="SUPFAM" id="SSF53335">
    <property type="entry name" value="S-adenosyl-L-methionine-dependent methyltransferases"/>
    <property type="match status" value="1"/>
</dbReference>
<dbReference type="PROSITE" id="PS01131">
    <property type="entry name" value="RRNA_A_DIMETH"/>
    <property type="match status" value="1"/>
</dbReference>
<dbReference type="PROSITE" id="PS51689">
    <property type="entry name" value="SAM_RNA_A_N6_MT"/>
    <property type="match status" value="1"/>
</dbReference>
<accession>A9I5F2</accession>
<keyword id="KW-0963">Cytoplasm</keyword>
<keyword id="KW-0489">Methyltransferase</keyword>
<keyword id="KW-0694">RNA-binding</keyword>
<keyword id="KW-0698">rRNA processing</keyword>
<keyword id="KW-0949">S-adenosyl-L-methionine</keyword>
<keyword id="KW-0808">Transferase</keyword>
<gene>
    <name evidence="1" type="primary">rsmA</name>
    <name evidence="1" type="synonym">ksgA</name>
    <name type="ordered locus">Bpet0762</name>
</gene>
<name>RSMA_BORPD</name>
<feature type="chain" id="PRO_1000130248" description="Ribosomal RNA small subunit methyltransferase A">
    <location>
        <begin position="1"/>
        <end position="262"/>
    </location>
</feature>
<feature type="binding site" evidence="1">
    <location>
        <position position="13"/>
    </location>
    <ligand>
        <name>S-adenosyl-L-methionine</name>
        <dbReference type="ChEBI" id="CHEBI:59789"/>
    </ligand>
</feature>
<feature type="binding site" evidence="1">
    <location>
        <position position="15"/>
    </location>
    <ligand>
        <name>S-adenosyl-L-methionine</name>
        <dbReference type="ChEBI" id="CHEBI:59789"/>
    </ligand>
</feature>
<feature type="binding site" evidence="1">
    <location>
        <position position="40"/>
    </location>
    <ligand>
        <name>S-adenosyl-L-methionine</name>
        <dbReference type="ChEBI" id="CHEBI:59789"/>
    </ligand>
</feature>
<feature type="binding site" evidence="1">
    <location>
        <position position="61"/>
    </location>
    <ligand>
        <name>S-adenosyl-L-methionine</name>
        <dbReference type="ChEBI" id="CHEBI:59789"/>
    </ligand>
</feature>
<feature type="binding site" evidence="1">
    <location>
        <position position="85"/>
    </location>
    <ligand>
        <name>S-adenosyl-L-methionine</name>
        <dbReference type="ChEBI" id="CHEBI:59789"/>
    </ligand>
</feature>
<feature type="binding site" evidence="1">
    <location>
        <position position="103"/>
    </location>
    <ligand>
        <name>S-adenosyl-L-methionine</name>
        <dbReference type="ChEBI" id="CHEBI:59789"/>
    </ligand>
</feature>
<proteinExistence type="inferred from homology"/>